<protein>
    <recommendedName>
        <fullName evidence="1">Probable holocytochrome-c-type synthase</fullName>
        <ecNumber evidence="1">4.4.1.17</ecNumber>
    </recommendedName>
    <alternativeName>
        <fullName evidence="1">Cytochrome c-type heme lyase</fullName>
        <shortName evidence="1">CCHL</shortName>
    </alternativeName>
</protein>
<dbReference type="EC" id="4.4.1.17" evidence="1"/>
<dbReference type="EMBL" id="Z49130">
    <property type="protein sequence ID" value="CAA88969.1"/>
    <property type="molecule type" value="Genomic_DNA"/>
</dbReference>
<dbReference type="PIR" id="T24579">
    <property type="entry name" value="T24579"/>
</dbReference>
<dbReference type="RefSeq" id="NP_496403.1">
    <property type="nucleotide sequence ID" value="NM_064002.8"/>
</dbReference>
<dbReference type="BioGRID" id="40022">
    <property type="interactions" value="6"/>
</dbReference>
<dbReference type="FunCoup" id="P53703">
    <property type="interactions" value="2855"/>
</dbReference>
<dbReference type="STRING" id="6239.T06D8.6.2"/>
<dbReference type="PaxDb" id="6239-T06D8.6.1"/>
<dbReference type="PeptideAtlas" id="P53703"/>
<dbReference type="EnsemblMetazoa" id="T06D8.6.1">
    <property type="protein sequence ID" value="T06D8.6.1"/>
    <property type="gene ID" value="WBGene00011527"/>
</dbReference>
<dbReference type="GeneID" id="174713"/>
<dbReference type="KEGG" id="cel:CELE_T06D8.6"/>
<dbReference type="UCSC" id="T06D8.6.1">
    <property type="organism name" value="c. elegans"/>
</dbReference>
<dbReference type="AGR" id="WB:WBGene00011527"/>
<dbReference type="CTD" id="174713"/>
<dbReference type="WormBase" id="T06D8.6">
    <property type="protein sequence ID" value="CE02327"/>
    <property type="gene ID" value="WBGene00011527"/>
    <property type="gene designation" value="cchl-1"/>
</dbReference>
<dbReference type="eggNOG" id="KOG3996">
    <property type="taxonomic scope" value="Eukaryota"/>
</dbReference>
<dbReference type="GeneTree" id="ENSGT00390000004175"/>
<dbReference type="HOGENOM" id="CLU_048602_2_0_1"/>
<dbReference type="InParanoid" id="P53703"/>
<dbReference type="OMA" id="NEESWKH"/>
<dbReference type="OrthoDB" id="4243at2759"/>
<dbReference type="PhylomeDB" id="P53703"/>
<dbReference type="Reactome" id="R-CEL-611105">
    <property type="pathway name" value="Respiratory electron transport"/>
</dbReference>
<dbReference type="PRO" id="PR:P53703"/>
<dbReference type="Proteomes" id="UP000001940">
    <property type="component" value="Chromosome II"/>
</dbReference>
<dbReference type="Bgee" id="WBGene00011527">
    <property type="expression patterns" value="Expressed in germ line (C elegans) and 4 other cell types or tissues"/>
</dbReference>
<dbReference type="GO" id="GO:0005743">
    <property type="term" value="C:mitochondrial inner membrane"/>
    <property type="evidence" value="ECO:0007669"/>
    <property type="project" value="UniProtKB-SubCell"/>
</dbReference>
<dbReference type="GO" id="GO:0005739">
    <property type="term" value="C:mitochondrion"/>
    <property type="evidence" value="ECO:0007005"/>
    <property type="project" value="WormBase"/>
</dbReference>
<dbReference type="GO" id="GO:0004408">
    <property type="term" value="F:holocytochrome-c synthase activity"/>
    <property type="evidence" value="ECO:0000318"/>
    <property type="project" value="GO_Central"/>
</dbReference>
<dbReference type="GO" id="GO:0046872">
    <property type="term" value="F:metal ion binding"/>
    <property type="evidence" value="ECO:0007669"/>
    <property type="project" value="UniProtKB-KW"/>
</dbReference>
<dbReference type="InterPro" id="IPR000511">
    <property type="entry name" value="Holocyt_c/c1_synthase"/>
</dbReference>
<dbReference type="PANTHER" id="PTHR12743">
    <property type="entry name" value="CYTOCHROME C1 HEME LYASE"/>
    <property type="match status" value="1"/>
</dbReference>
<dbReference type="PANTHER" id="PTHR12743:SF0">
    <property type="entry name" value="HOLOCYTOCHROME C-TYPE SYNTHASE"/>
    <property type="match status" value="1"/>
</dbReference>
<dbReference type="Pfam" id="PF01265">
    <property type="entry name" value="Cyto_heme_lyase"/>
    <property type="match status" value="1"/>
</dbReference>
<dbReference type="PROSITE" id="PS00821">
    <property type="entry name" value="CYTO_HEME_LYASE_1"/>
    <property type="match status" value="1"/>
</dbReference>
<dbReference type="PROSITE" id="PS00822">
    <property type="entry name" value="CYTO_HEME_LYASE_2"/>
    <property type="match status" value="1"/>
</dbReference>
<comment type="function">
    <text evidence="1">Probable lyase that catalyzes the covalent linking of the heme group to the cytochrome C apoprotein to produce the mature functional cytochrome.</text>
</comment>
<comment type="catalytic activity">
    <reaction evidence="1">
        <text>holo-[cytochrome c] = apo-[cytochrome c] + heme b</text>
        <dbReference type="Rhea" id="RHEA:22648"/>
        <dbReference type="Rhea" id="RHEA-COMP:10725"/>
        <dbReference type="Rhea" id="RHEA-COMP:10726"/>
        <dbReference type="ChEBI" id="CHEBI:29950"/>
        <dbReference type="ChEBI" id="CHEBI:60344"/>
        <dbReference type="ChEBI" id="CHEBI:83739"/>
        <dbReference type="EC" id="4.4.1.17"/>
    </reaction>
    <physiologicalReaction direction="right-to-left" evidence="1">
        <dbReference type="Rhea" id="RHEA:22650"/>
    </physiologicalReaction>
</comment>
<comment type="subcellular location">
    <subcellularLocation>
        <location evidence="1">Mitochondrion inner membrane</location>
    </subcellularLocation>
</comment>
<comment type="similarity">
    <text evidence="3">Belongs to the cytochrome c-type heme lyase family.</text>
</comment>
<sequence length="280" mass="31263">MGSSQSTPKVQDANADAERIRKAQHSMAAAGGGSQCPLTPEQRAAASGENCGAGGACPVGADKASINPLNNELEHPNQKPAPDQPFALPTKREKSTIPKAGTETETWTYPSPQMFWNAMLKKGWRWQDDSLSKSDMENIISIHNANNEEAWREVLKWENLLHPECAEPKLKSFKGDAKNLSPRARFRNLFLGYDLPFDRHDWIVDRCGTKQVQYVIDYYDGGAVDPSSKLFTILDVRPAVNDIGNIWDRMVVAYWRFKFETLGFTPSLPIPPTEGHNVNH</sequence>
<keyword id="KW-0349">Heme</keyword>
<keyword id="KW-0408">Iron</keyword>
<keyword id="KW-0456">Lyase</keyword>
<keyword id="KW-0472">Membrane</keyword>
<keyword id="KW-0479">Metal-binding</keyword>
<keyword id="KW-0496">Mitochondrion</keyword>
<keyword id="KW-0999">Mitochondrion inner membrane</keyword>
<keyword id="KW-1185">Reference proteome</keyword>
<keyword id="KW-0677">Repeat</keyword>
<feature type="chain" id="PRO_0000121714" description="Probable holocytochrome-c-type synthase">
    <location>
        <begin position="1"/>
        <end position="280"/>
    </location>
</feature>
<feature type="repeat" description="HRM 1">
    <location>
        <begin position="35"/>
        <end position="40"/>
    </location>
</feature>
<feature type="repeat" description="HRM 2">
    <location>
        <begin position="56"/>
        <end position="61"/>
    </location>
</feature>
<feature type="region of interest" description="Disordered" evidence="2">
    <location>
        <begin position="1"/>
        <end position="95"/>
    </location>
</feature>
<name>CCHL_CAEEL</name>
<reference key="1">
    <citation type="journal article" date="1998" name="Science">
        <title>Genome sequence of the nematode C. elegans: a platform for investigating biology.</title>
        <authorList>
            <consortium name="The C. elegans sequencing consortium"/>
        </authorList>
    </citation>
    <scope>NUCLEOTIDE SEQUENCE [LARGE SCALE GENOMIC DNA]</scope>
    <source>
        <strain>Bristol N2</strain>
    </source>
</reference>
<organism>
    <name type="scientific">Caenorhabditis elegans</name>
    <dbReference type="NCBI Taxonomy" id="6239"/>
    <lineage>
        <taxon>Eukaryota</taxon>
        <taxon>Metazoa</taxon>
        <taxon>Ecdysozoa</taxon>
        <taxon>Nematoda</taxon>
        <taxon>Chromadorea</taxon>
        <taxon>Rhabditida</taxon>
        <taxon>Rhabditina</taxon>
        <taxon>Rhabditomorpha</taxon>
        <taxon>Rhabditoidea</taxon>
        <taxon>Rhabditidae</taxon>
        <taxon>Peloderinae</taxon>
        <taxon>Caenorhabditis</taxon>
    </lineage>
</organism>
<proteinExistence type="inferred from homology"/>
<accession>P53703</accession>
<gene>
    <name type="primary">cchl-1</name>
    <name type="ORF">T06D8.6</name>
</gene>
<evidence type="ECO:0000250" key="1">
    <source>
        <dbReference type="UniProtKB" id="P53701"/>
    </source>
</evidence>
<evidence type="ECO:0000256" key="2">
    <source>
        <dbReference type="SAM" id="MobiDB-lite"/>
    </source>
</evidence>
<evidence type="ECO:0000305" key="3"/>